<proteinExistence type="predicted"/>
<protein>
    <recommendedName>
        <fullName>Replication initiation protein</fullName>
    </recommendedName>
    <alternativeName>
        <fullName>Replication-associated protein</fullName>
    </alternativeName>
</protein>
<accession>P18023</accession>
<keyword id="KW-0235">DNA replication</keyword>
<keyword id="KW-0614">Plasmid</keyword>
<gene>
    <name type="primary">repZ</name>
</gene>
<geneLocation type="plasmid">
    <name>IncI1 ColIb-P9</name>
</geneLocation>
<name>REPZ_ECOLX</name>
<evidence type="ECO:0000256" key="1">
    <source>
        <dbReference type="SAM" id="MobiDB-lite"/>
    </source>
</evidence>
<sequence length="343" mass="40510">MAGLKNTPYNAVHWSQLAPEEQIRFWEDYEAGRATTFLVEPERKRTKRRRGEHSTKPKCENPSWYRPERYKALKGQLGHAYNRLVKKDPVTGEQSLRMRMSRHPFYVQKRTFVGRKYAFRPEKQRLLDAIWPVLVSFSDAGTHTVGMSVTRLAEEISPKDSEGHVIPELEVTVSRLSRLLAEQVRFGVLGVSEETMWDREHRQRLPRYVWITPAGWQMLGVDMVKLHEQQQKRLRESEIRQQLIREGVLREDEDISVHAARKRWYLQRSQDALKKRREKAAASKRANRLKKLPVDQQIYEMAEYLRKRLPPDEAYFCSDDHLKRLAIRELRQLELTLAAPPPH</sequence>
<feature type="chain" id="PRO_0000068340" description="Replication initiation protein">
    <location>
        <begin position="1"/>
        <end position="343"/>
    </location>
</feature>
<feature type="region of interest" description="Disordered" evidence="1">
    <location>
        <begin position="42"/>
        <end position="61"/>
    </location>
</feature>
<dbReference type="EMBL" id="M34837">
    <property type="protein sequence ID" value="AAA23191.1"/>
    <property type="molecule type" value="Genomic_DNA"/>
</dbReference>
<dbReference type="PIR" id="A35152">
    <property type="entry name" value="A35152"/>
</dbReference>
<dbReference type="RefSeq" id="YP_009061303.1">
    <property type="nucleotide sequence ID" value="NC_024977.1"/>
</dbReference>
<dbReference type="GO" id="GO:0006260">
    <property type="term" value="P:DNA replication"/>
    <property type="evidence" value="ECO:0007669"/>
    <property type="project" value="UniProtKB-KW"/>
</dbReference>
<dbReference type="GO" id="GO:0006276">
    <property type="term" value="P:plasmid maintenance"/>
    <property type="evidence" value="ECO:0007669"/>
    <property type="project" value="InterPro"/>
</dbReference>
<dbReference type="InterPro" id="IPR003446">
    <property type="entry name" value="Plasmid_replication_init_RepA"/>
</dbReference>
<dbReference type="NCBIfam" id="NF040977">
    <property type="entry name" value="RepA_IncFII_LM"/>
    <property type="match status" value="1"/>
</dbReference>
<comment type="function">
    <text>Probably functions as an initiator for the IncI1 ColIb-P9 replicon.</text>
</comment>
<organism>
    <name type="scientific">Escherichia coli</name>
    <dbReference type="NCBI Taxonomy" id="562"/>
    <lineage>
        <taxon>Bacteria</taxon>
        <taxon>Pseudomonadati</taxon>
        <taxon>Pseudomonadota</taxon>
        <taxon>Gammaproteobacteria</taxon>
        <taxon>Enterobacterales</taxon>
        <taxon>Enterobacteriaceae</taxon>
        <taxon>Escherichia</taxon>
    </lineage>
</organism>
<reference key="1">
    <citation type="journal article" date="1990" name="J. Bacteriol.">
        <title>Organization of the replication control region of plasmid ColIb-P9.</title>
        <authorList>
            <person name="Hama C."/>
            <person name="Takizawa T."/>
            <person name="Moriwaki H."/>
            <person name="Urasaki Y."/>
            <person name="Mizobuchi K."/>
        </authorList>
    </citation>
    <scope>NUCLEOTIDE SEQUENCE [GENOMIC DNA]</scope>
</reference>
<reference key="2">
    <citation type="journal article" date="1990" name="J. Biol. Chem.">
        <title>Role of leader peptide synthesis in repZ gene expression of the ColIb-P9 plasmid.</title>
        <authorList>
            <person name="Hama C."/>
            <person name="Takizawa T."/>
            <person name="Moriwaki H."/>
            <person name="Mizobuchi K."/>
        </authorList>
    </citation>
    <scope>NUCLEOTIDE SEQUENCE [GENOMIC DNA] OF 1-9</scope>
</reference>